<name>ERD22_CAEEL</name>
<gene>
    <name evidence="4" type="primary">erd-2.2</name>
    <name evidence="4" type="ORF">C28H8.4</name>
</gene>
<proteinExistence type="inferred from homology"/>
<sequence>MNIFRISADMSHLLAIIILLLKIWKSRSCSGISARSQILFALVFTARYLDLFSTYISLYNTTMKITFLAATYATVYLMFFKFRSTYMRESDTFRVELLIVPAAILALLINHDFAPFELLWTFSIYLEAVAILPQLFLLQSTGSAEVITAHYLFALGSYRALYIFNWIYRYYTEDYFDPIVVVAGIVQTVLYADFFYLYVTRVVQTRKGMELPI</sequence>
<feature type="chain" id="PRO_0000194162" description="ER lumen protein-retaining receptor erd-2.2">
    <location>
        <begin position="1"/>
        <end position="213"/>
    </location>
</feature>
<feature type="topological domain" description="Lumenal" evidence="2">
    <location>
        <begin position="1"/>
        <end position="2"/>
    </location>
</feature>
<feature type="transmembrane region" description="Helical" evidence="2">
    <location>
        <begin position="3"/>
        <end position="21"/>
    </location>
</feature>
<feature type="topological domain" description="Cytoplasmic" evidence="2">
    <location>
        <begin position="22"/>
        <end position="35"/>
    </location>
</feature>
<feature type="transmembrane region" description="Helical" evidence="2">
    <location>
        <begin position="36"/>
        <end position="53"/>
    </location>
</feature>
<feature type="topological domain" description="Lumenal" evidence="2">
    <location>
        <begin position="54"/>
        <end position="61"/>
    </location>
</feature>
<feature type="transmembrane region" description="Helical" evidence="2">
    <location>
        <begin position="62"/>
        <end position="80"/>
    </location>
</feature>
<feature type="topological domain" description="Cytoplasmic" evidence="2">
    <location>
        <begin position="81"/>
        <end position="96"/>
    </location>
</feature>
<feature type="transmembrane region" description="Helical" evidence="2">
    <location>
        <begin position="97"/>
        <end position="110"/>
    </location>
</feature>
<feature type="topological domain" description="Lumenal" evidence="2">
    <location>
        <begin position="111"/>
        <end position="117"/>
    </location>
</feature>
<feature type="transmembrane region" description="Helical" evidence="2">
    <location>
        <begin position="118"/>
        <end position="137"/>
    </location>
</feature>
<feature type="topological domain" description="Cytoplasmic" evidence="2">
    <location>
        <begin position="138"/>
        <end position="149"/>
    </location>
</feature>
<feature type="transmembrane region" description="Helical" evidence="2">
    <location>
        <begin position="150"/>
        <end position="168"/>
    </location>
</feature>
<feature type="topological domain" description="Lumenal" evidence="2">
    <location>
        <begin position="169"/>
        <end position="178"/>
    </location>
</feature>
<feature type="transmembrane region" description="Helical" evidence="2">
    <location>
        <begin position="179"/>
        <end position="199"/>
    </location>
</feature>
<feature type="topological domain" description="Cytoplasmic" evidence="2">
    <location>
        <begin position="200"/>
        <end position="213"/>
    </location>
</feature>
<dbReference type="EMBL" id="BX284603">
    <property type="protein sequence ID" value="CCD65964.1"/>
    <property type="molecule type" value="Genomic_DNA"/>
</dbReference>
<dbReference type="PIR" id="H88469">
    <property type="entry name" value="H88469"/>
</dbReference>
<dbReference type="RefSeq" id="NP_498282.1">
    <property type="nucleotide sequence ID" value="NM_065881.5"/>
</dbReference>
<dbReference type="SMR" id="Q09473"/>
<dbReference type="FunCoup" id="Q09473">
    <property type="interactions" value="2130"/>
</dbReference>
<dbReference type="STRING" id="6239.C28H8.4.1"/>
<dbReference type="PaxDb" id="6239-C28H8.4.1"/>
<dbReference type="EnsemblMetazoa" id="C28H8.4.1">
    <property type="protein sequence ID" value="C28H8.4.1"/>
    <property type="gene ID" value="WBGene00016195"/>
</dbReference>
<dbReference type="EnsemblMetazoa" id="C28H8.4.2">
    <property type="protein sequence ID" value="C28H8.4.2"/>
    <property type="gene ID" value="WBGene00016195"/>
</dbReference>
<dbReference type="GeneID" id="175833"/>
<dbReference type="KEGG" id="cel:CELE_C28H8.4"/>
<dbReference type="UCSC" id="C28H8.4">
    <property type="organism name" value="c. elegans"/>
</dbReference>
<dbReference type="AGR" id="WB:WBGene00016195"/>
<dbReference type="CTD" id="175833"/>
<dbReference type="WormBase" id="C28H8.4">
    <property type="protein sequence ID" value="CE01826"/>
    <property type="gene ID" value="WBGene00016195"/>
    <property type="gene designation" value="erd-2.2"/>
</dbReference>
<dbReference type="eggNOG" id="KOG3106">
    <property type="taxonomic scope" value="Eukaryota"/>
</dbReference>
<dbReference type="GeneTree" id="ENSGT00390000004010"/>
<dbReference type="HOGENOM" id="CLU_057784_0_0_1"/>
<dbReference type="InParanoid" id="Q09473"/>
<dbReference type="OMA" id="RTMKSCA"/>
<dbReference type="OrthoDB" id="7694678at2759"/>
<dbReference type="PhylomeDB" id="Q09473"/>
<dbReference type="Reactome" id="R-CEL-6807878">
    <property type="pathway name" value="COPI-mediated anterograde transport"/>
</dbReference>
<dbReference type="Reactome" id="R-CEL-6811434">
    <property type="pathway name" value="COPI-dependent Golgi-to-ER retrograde traffic"/>
</dbReference>
<dbReference type="PRO" id="PR:Q09473"/>
<dbReference type="Proteomes" id="UP000001940">
    <property type="component" value="Chromosome III"/>
</dbReference>
<dbReference type="Bgee" id="WBGene00016195">
    <property type="expression patterns" value="Expressed in embryo and 4 other cell types or tissues"/>
</dbReference>
<dbReference type="GO" id="GO:0005789">
    <property type="term" value="C:endoplasmic reticulum membrane"/>
    <property type="evidence" value="ECO:0007669"/>
    <property type="project" value="UniProtKB-SubCell"/>
</dbReference>
<dbReference type="GO" id="GO:0046923">
    <property type="term" value="F:ER retention sequence binding"/>
    <property type="evidence" value="ECO:0007669"/>
    <property type="project" value="InterPro"/>
</dbReference>
<dbReference type="GO" id="GO:0006621">
    <property type="term" value="P:protein retention in ER lumen"/>
    <property type="evidence" value="ECO:0007669"/>
    <property type="project" value="InterPro"/>
</dbReference>
<dbReference type="GO" id="GO:0015031">
    <property type="term" value="P:protein transport"/>
    <property type="evidence" value="ECO:0007669"/>
    <property type="project" value="UniProtKB-KW"/>
</dbReference>
<dbReference type="GO" id="GO:0016192">
    <property type="term" value="P:vesicle-mediated transport"/>
    <property type="evidence" value="ECO:0007669"/>
    <property type="project" value="UniProtKB-KW"/>
</dbReference>
<dbReference type="InterPro" id="IPR000133">
    <property type="entry name" value="ER_ret_rcpt"/>
</dbReference>
<dbReference type="PANTHER" id="PTHR10585">
    <property type="entry name" value="ER LUMEN PROTEIN RETAINING RECEPTOR"/>
    <property type="match status" value="1"/>
</dbReference>
<dbReference type="Pfam" id="PF00810">
    <property type="entry name" value="ER_lumen_recept"/>
    <property type="match status" value="1"/>
</dbReference>
<dbReference type="PRINTS" id="PR00660">
    <property type="entry name" value="ERLUMENR"/>
</dbReference>
<dbReference type="PROSITE" id="PS00951">
    <property type="entry name" value="ER_LUMEN_RECEPTOR_1"/>
    <property type="match status" value="1"/>
</dbReference>
<dbReference type="PROSITE" id="PS00952">
    <property type="entry name" value="ER_LUMEN_RECEPTOR_2"/>
    <property type="match status" value="1"/>
</dbReference>
<reference key="1">
    <citation type="journal article" date="1998" name="Science">
        <title>Genome sequence of the nematode C. elegans: a platform for investigating biology.</title>
        <authorList>
            <consortium name="The C. elegans sequencing consortium"/>
        </authorList>
    </citation>
    <scope>NUCLEOTIDE SEQUENCE [LARGE SCALE GENOMIC DNA]</scope>
    <source>
        <strain>Bristol N2</strain>
    </source>
</reference>
<keyword id="KW-0256">Endoplasmic reticulum</keyword>
<keyword id="KW-0931">ER-Golgi transport</keyword>
<keyword id="KW-0472">Membrane</keyword>
<keyword id="KW-0653">Protein transport</keyword>
<keyword id="KW-0675">Receptor</keyword>
<keyword id="KW-1185">Reference proteome</keyword>
<keyword id="KW-0812">Transmembrane</keyword>
<keyword id="KW-1133">Transmembrane helix</keyword>
<keyword id="KW-0813">Transport</keyword>
<organism>
    <name type="scientific">Caenorhabditis elegans</name>
    <dbReference type="NCBI Taxonomy" id="6239"/>
    <lineage>
        <taxon>Eukaryota</taxon>
        <taxon>Metazoa</taxon>
        <taxon>Ecdysozoa</taxon>
        <taxon>Nematoda</taxon>
        <taxon>Chromadorea</taxon>
        <taxon>Rhabditida</taxon>
        <taxon>Rhabditina</taxon>
        <taxon>Rhabditomorpha</taxon>
        <taxon>Rhabditoidea</taxon>
        <taxon>Rhabditidae</taxon>
        <taxon>Peloderinae</taxon>
        <taxon>Caenorhabditis</taxon>
    </lineage>
</organism>
<accession>Q09473</accession>
<comment type="function">
    <text evidence="1">Required for the retention of luminal endoplasmic reticulum proteins. Determines the specificity of the luminal ER protein retention system. Also required for normal vesicular traffic through the Golgi (By similarity).</text>
</comment>
<comment type="subcellular location">
    <subcellularLocation>
        <location>Endoplasmic reticulum membrane</location>
        <topology>Multi-pass membrane protein</topology>
    </subcellularLocation>
</comment>
<comment type="similarity">
    <text evidence="3">Belongs to the ERD2 family.</text>
</comment>
<protein>
    <recommendedName>
        <fullName evidence="3">ER lumen protein-retaining receptor erd-2.2</fullName>
    </recommendedName>
</protein>
<evidence type="ECO:0000250" key="1"/>
<evidence type="ECO:0000255" key="2"/>
<evidence type="ECO:0000305" key="3"/>
<evidence type="ECO:0000312" key="4">
    <source>
        <dbReference type="WormBase" id="C28H8.4"/>
    </source>
</evidence>